<dbReference type="EMBL" id="MN208354">
    <property type="protein sequence ID" value="QHB21543.1"/>
    <property type="molecule type" value="mRNA"/>
</dbReference>
<dbReference type="GO" id="GO:0005576">
    <property type="term" value="C:extracellular region"/>
    <property type="evidence" value="ECO:0007669"/>
    <property type="project" value="UniProtKB-SubCell"/>
</dbReference>
<dbReference type="GO" id="GO:0090729">
    <property type="term" value="F:toxin activity"/>
    <property type="evidence" value="ECO:0007669"/>
    <property type="project" value="UniProtKB-KW"/>
</dbReference>
<reference key="1">
    <citation type="journal article" date="2019" name="Toxins">
        <title>Missiles of mass disruption: composition and glandular origin of venom used as a projectile defensive weapon by the assassin bug Platymeris rhadamanthus.</title>
        <authorList>
            <person name="Walker A.A."/>
            <person name="Robinson S.D."/>
            <person name="Undheim E.A.B."/>
            <person name="Jin J."/>
            <person name="Han X."/>
            <person name="Fry B.G."/>
            <person name="Vetter I."/>
            <person name="King G.F."/>
        </authorList>
    </citation>
    <scope>NUCLEOTIDE SEQUENCE [MRNA]</scope>
    <scope>POSSIBLE FUNCTION</scope>
    <scope>IDENTIFICATION BY MASS SPECTROMETRY</scope>
    <scope>SUBCELLULAR LOCATION</scope>
    <scope>TISSUE SPECIFICITY</scope>
    <source>
        <tissue>Venom</tissue>
        <tissue>Venom gland</tissue>
    </source>
</reference>
<name>RED2_PLARH</name>
<accession>A0A6B9L900</accession>
<sequence length="242" mass="26859">MSKIWILLLLVGAVQFARGFPALEEEQEDDVIDWPSFEYDLSDEERGKGLDWLKKQWGKLKNSFKKVGAKVTATFNKGRDYLKKKGIKVDPLNCQGNKCRSCVIFTLKPKKFCIEYVFSTSAITVSLIKEKDDEEKVLLGPFTIKTGNIPKCCKLGSFIGELCLQGVEGRLKSSNGKPHVNLCVGLLLKKFGCGAKICVSYVDGKFSVSFKPKLFAGDEENGTIMEAGEKEDEGKVIDAVPE</sequence>
<proteinExistence type="evidence at protein level"/>
<feature type="signal peptide" evidence="2">
    <location>
        <begin position="1"/>
        <end position="19"/>
    </location>
</feature>
<feature type="propeptide" id="PRO_0000454324" evidence="1">
    <location>
        <begin position="20"/>
        <end position="46"/>
    </location>
</feature>
<feature type="chain" id="PRO_5025402274" description="Venom redulysin 2" evidence="1">
    <location>
        <begin position="47"/>
        <end position="242"/>
    </location>
</feature>
<comment type="function">
    <text evidence="1 6">Highly abundant protein that may be responsible for the observed disruption of sensory neuron membranes, since it is homologous to proteins such as trialysin, which forms pores in lipid bilayers (Probable). Probable insecticidal toxin (By similarity).</text>
</comment>
<comment type="subcellular location">
    <subcellularLocation>
        <location evidence="3">Secreted</location>
    </subcellularLocation>
</comment>
<comment type="tissue specificity">
    <text evidence="3">Expressed by the venom gland (posterior main gland) (at protein level).</text>
</comment>
<comment type="PTM">
    <text evidence="5">Contains 5 disulfide bonds.</text>
</comment>
<comment type="similarity">
    <text evidence="5">Belongs to the redulysin-like family.</text>
</comment>
<organism>
    <name type="scientific">Platymeris rhadamanthus</name>
    <name type="common">Red spot assassin bug</name>
    <dbReference type="NCBI Taxonomy" id="1134088"/>
    <lineage>
        <taxon>Eukaryota</taxon>
        <taxon>Metazoa</taxon>
        <taxon>Ecdysozoa</taxon>
        <taxon>Arthropoda</taxon>
        <taxon>Hexapoda</taxon>
        <taxon>Insecta</taxon>
        <taxon>Pterygota</taxon>
        <taxon>Neoptera</taxon>
        <taxon>Paraneoptera</taxon>
        <taxon>Hemiptera</taxon>
        <taxon>Heteroptera</taxon>
        <taxon>Panheteroptera</taxon>
        <taxon>Cimicomorpha</taxon>
        <taxon>Reduviidae</taxon>
        <taxon>Platymeris</taxon>
    </lineage>
</organism>
<keyword id="KW-1015">Disulfide bond</keyword>
<keyword id="KW-0964">Secreted</keyword>
<keyword id="KW-0732">Signal</keyword>
<keyword id="KW-0800">Toxin</keyword>
<evidence type="ECO:0000250" key="1">
    <source>
        <dbReference type="UniProtKB" id="P0DQR9"/>
    </source>
</evidence>
<evidence type="ECO:0000255" key="2"/>
<evidence type="ECO:0000269" key="3">
    <source>
    </source>
</evidence>
<evidence type="ECO:0000303" key="4">
    <source>
    </source>
</evidence>
<evidence type="ECO:0000305" key="5"/>
<evidence type="ECO:0000305" key="6">
    <source>
    </source>
</evidence>
<protein>
    <recommendedName>
        <fullName evidence="4">Venom redulysin 2</fullName>
        <shortName evidence="4">Red2</shortName>
    </recommendedName>
</protein>